<keyword id="KW-0963">Cytoplasm</keyword>
<name>RECX_BACMK</name>
<protein>
    <recommendedName>
        <fullName evidence="1">Regulatory protein RecX</fullName>
    </recommendedName>
</protein>
<sequence>MTVITKIEVQKRSKERFNIYIDKGQGEEYGFSVNQSILMKHGLQKGLEIDEVALGNILYNEEVQKAYLQAISYLSYQMRTKQEIEDFLRKKEVGQAIISEVVSKLLHDRYINDKEYAISYVRTQSNVNQKGPTVIRRGLLSKGVQDLIITHSLQEYPKEKQMENALFLIEKKKKSYQKHSFLQMKLKLDEMLVRKGYSRDVIQICLEELKDEKDDEQQQEALHYHGNKYYEKYKKYDGWTFENKVKQALYRKGFSIDEIDIFLQMKREEG</sequence>
<feature type="chain" id="PRO_1000137155" description="Regulatory protein RecX">
    <location>
        <begin position="1"/>
        <end position="270"/>
    </location>
</feature>
<proteinExistence type="inferred from homology"/>
<comment type="function">
    <text evidence="1">Modulates RecA activity.</text>
</comment>
<comment type="subcellular location">
    <subcellularLocation>
        <location evidence="1">Cytoplasm</location>
    </subcellularLocation>
</comment>
<comment type="similarity">
    <text evidence="1">Belongs to the RecX family.</text>
</comment>
<organism>
    <name type="scientific">Bacillus mycoides (strain KBAB4)</name>
    <name type="common">Bacillus weihenstephanensis</name>
    <dbReference type="NCBI Taxonomy" id="315730"/>
    <lineage>
        <taxon>Bacteria</taxon>
        <taxon>Bacillati</taxon>
        <taxon>Bacillota</taxon>
        <taxon>Bacilli</taxon>
        <taxon>Bacillales</taxon>
        <taxon>Bacillaceae</taxon>
        <taxon>Bacillus</taxon>
        <taxon>Bacillus cereus group</taxon>
    </lineage>
</organism>
<evidence type="ECO:0000255" key="1">
    <source>
        <dbReference type="HAMAP-Rule" id="MF_01114"/>
    </source>
</evidence>
<accession>A9VSR3</accession>
<dbReference type="EMBL" id="CP000903">
    <property type="protein sequence ID" value="ABY41699.1"/>
    <property type="molecule type" value="Genomic_DNA"/>
</dbReference>
<dbReference type="RefSeq" id="WP_002029629.1">
    <property type="nucleotide sequence ID" value="NC_010184.1"/>
</dbReference>
<dbReference type="SMR" id="A9VSR3"/>
<dbReference type="GeneID" id="66264445"/>
<dbReference type="KEGG" id="bwe:BcerKBAB4_0433"/>
<dbReference type="eggNOG" id="COG2137">
    <property type="taxonomic scope" value="Bacteria"/>
</dbReference>
<dbReference type="HOGENOM" id="CLU_066607_4_0_9"/>
<dbReference type="Proteomes" id="UP000002154">
    <property type="component" value="Chromosome"/>
</dbReference>
<dbReference type="GO" id="GO:0005737">
    <property type="term" value="C:cytoplasm"/>
    <property type="evidence" value="ECO:0007669"/>
    <property type="project" value="UniProtKB-SubCell"/>
</dbReference>
<dbReference type="GO" id="GO:0006282">
    <property type="term" value="P:regulation of DNA repair"/>
    <property type="evidence" value="ECO:0007669"/>
    <property type="project" value="UniProtKB-UniRule"/>
</dbReference>
<dbReference type="Gene3D" id="1.10.10.10">
    <property type="entry name" value="Winged helix-like DNA-binding domain superfamily/Winged helix DNA-binding domain"/>
    <property type="match status" value="4"/>
</dbReference>
<dbReference type="HAMAP" id="MF_01114">
    <property type="entry name" value="RecX"/>
    <property type="match status" value="1"/>
</dbReference>
<dbReference type="InterPro" id="IPR053926">
    <property type="entry name" value="RecX_HTH_1st"/>
</dbReference>
<dbReference type="InterPro" id="IPR053924">
    <property type="entry name" value="RecX_HTH_2nd"/>
</dbReference>
<dbReference type="InterPro" id="IPR053925">
    <property type="entry name" value="RecX_HTH_3rd"/>
</dbReference>
<dbReference type="InterPro" id="IPR003783">
    <property type="entry name" value="Regulatory_RecX"/>
</dbReference>
<dbReference type="InterPro" id="IPR036388">
    <property type="entry name" value="WH-like_DNA-bd_sf"/>
</dbReference>
<dbReference type="NCBIfam" id="NF010733">
    <property type="entry name" value="PRK14135.1"/>
    <property type="match status" value="1"/>
</dbReference>
<dbReference type="PANTHER" id="PTHR33602">
    <property type="entry name" value="REGULATORY PROTEIN RECX FAMILY PROTEIN"/>
    <property type="match status" value="1"/>
</dbReference>
<dbReference type="PANTHER" id="PTHR33602:SF1">
    <property type="entry name" value="REGULATORY PROTEIN RECX FAMILY PROTEIN"/>
    <property type="match status" value="1"/>
</dbReference>
<dbReference type="Pfam" id="PF21982">
    <property type="entry name" value="RecX_HTH1"/>
    <property type="match status" value="1"/>
</dbReference>
<dbReference type="Pfam" id="PF02631">
    <property type="entry name" value="RecX_HTH2"/>
    <property type="match status" value="1"/>
</dbReference>
<dbReference type="Pfam" id="PF21981">
    <property type="entry name" value="RecX_HTH3"/>
    <property type="match status" value="2"/>
</dbReference>
<gene>
    <name evidence="1" type="primary">recX</name>
    <name type="ordered locus">BcerKBAB4_0433</name>
</gene>
<reference key="1">
    <citation type="journal article" date="2008" name="Chem. Biol. Interact.">
        <title>Extending the Bacillus cereus group genomics to putative food-borne pathogens of different toxicity.</title>
        <authorList>
            <person name="Lapidus A."/>
            <person name="Goltsman E."/>
            <person name="Auger S."/>
            <person name="Galleron N."/>
            <person name="Segurens B."/>
            <person name="Dossat C."/>
            <person name="Land M.L."/>
            <person name="Broussolle V."/>
            <person name="Brillard J."/>
            <person name="Guinebretiere M.-H."/>
            <person name="Sanchis V."/>
            <person name="Nguen-the C."/>
            <person name="Lereclus D."/>
            <person name="Richardson P."/>
            <person name="Wincker P."/>
            <person name="Weissenbach J."/>
            <person name="Ehrlich S.D."/>
            <person name="Sorokin A."/>
        </authorList>
    </citation>
    <scope>NUCLEOTIDE SEQUENCE [LARGE SCALE GENOMIC DNA]</scope>
    <source>
        <strain>KBAB4</strain>
    </source>
</reference>